<proteinExistence type="evidence at transcript level"/>
<keyword id="KW-0472">Membrane</keyword>
<keyword id="KW-0479">Metal-binding</keyword>
<keyword id="KW-1185">Reference proteome</keyword>
<keyword id="KW-0808">Transferase</keyword>
<keyword id="KW-0812">Transmembrane</keyword>
<keyword id="KW-1133">Transmembrane helix</keyword>
<keyword id="KW-0833">Ubl conjugation pathway</keyword>
<keyword id="KW-0862">Zinc</keyword>
<keyword id="KW-0863">Zinc-finger</keyword>
<reference key="1">
    <citation type="journal article" date="1999" name="Nature">
        <title>Sequence and analysis of chromosome 2 of the plant Arabidopsis thaliana.</title>
        <authorList>
            <person name="Lin X."/>
            <person name="Kaul S."/>
            <person name="Rounsley S.D."/>
            <person name="Shea T.P."/>
            <person name="Benito M.-I."/>
            <person name="Town C.D."/>
            <person name="Fujii C.Y."/>
            <person name="Mason T.M."/>
            <person name="Bowman C.L."/>
            <person name="Barnstead M.E."/>
            <person name="Feldblyum T.V."/>
            <person name="Buell C.R."/>
            <person name="Ketchum K.A."/>
            <person name="Lee J.J."/>
            <person name="Ronning C.M."/>
            <person name="Koo H.L."/>
            <person name="Moffat K.S."/>
            <person name="Cronin L.A."/>
            <person name="Shen M."/>
            <person name="Pai G."/>
            <person name="Van Aken S."/>
            <person name="Umayam L."/>
            <person name="Tallon L.J."/>
            <person name="Gill J.E."/>
            <person name="Adams M.D."/>
            <person name="Carrera A.J."/>
            <person name="Creasy T.H."/>
            <person name="Goodman H.M."/>
            <person name="Somerville C.R."/>
            <person name="Copenhaver G.P."/>
            <person name="Preuss D."/>
            <person name="Nierman W.C."/>
            <person name="White O."/>
            <person name="Eisen J.A."/>
            <person name="Salzberg S.L."/>
            <person name="Fraser C.M."/>
            <person name="Venter J.C."/>
        </authorList>
    </citation>
    <scope>NUCLEOTIDE SEQUENCE [LARGE SCALE GENOMIC DNA]</scope>
    <source>
        <strain>cv. Columbia</strain>
    </source>
</reference>
<reference key="2">
    <citation type="journal article" date="2017" name="Plant J.">
        <title>Araport11: a complete reannotation of the Arabidopsis thaliana reference genome.</title>
        <authorList>
            <person name="Cheng C.Y."/>
            <person name="Krishnakumar V."/>
            <person name="Chan A.P."/>
            <person name="Thibaud-Nissen F."/>
            <person name="Schobel S."/>
            <person name="Town C.D."/>
        </authorList>
    </citation>
    <scope>GENOME REANNOTATION</scope>
    <source>
        <strain>cv. Columbia</strain>
    </source>
</reference>
<reference key="3">
    <citation type="journal article" date="2003" name="Science">
        <title>Empirical analysis of transcriptional activity in the Arabidopsis genome.</title>
        <authorList>
            <person name="Yamada K."/>
            <person name="Lim J."/>
            <person name="Dale J.M."/>
            <person name="Chen H."/>
            <person name="Shinn P."/>
            <person name="Palm C.J."/>
            <person name="Southwick A.M."/>
            <person name="Wu H.C."/>
            <person name="Kim C.J."/>
            <person name="Nguyen M."/>
            <person name="Pham P.K."/>
            <person name="Cheuk R.F."/>
            <person name="Karlin-Newmann G."/>
            <person name="Liu S.X."/>
            <person name="Lam B."/>
            <person name="Sakano H."/>
            <person name="Wu T."/>
            <person name="Yu G."/>
            <person name="Miranda M."/>
            <person name="Quach H.L."/>
            <person name="Tripp M."/>
            <person name="Chang C.H."/>
            <person name="Lee J.M."/>
            <person name="Toriumi M.J."/>
            <person name="Chan M.M."/>
            <person name="Tang C.C."/>
            <person name="Onodera C.S."/>
            <person name="Deng J.M."/>
            <person name="Akiyama K."/>
            <person name="Ansari Y."/>
            <person name="Arakawa T."/>
            <person name="Banh J."/>
            <person name="Banno F."/>
            <person name="Bowser L."/>
            <person name="Brooks S.Y."/>
            <person name="Carninci P."/>
            <person name="Chao Q."/>
            <person name="Choy N."/>
            <person name="Enju A."/>
            <person name="Goldsmith A.D."/>
            <person name="Gurjal M."/>
            <person name="Hansen N.F."/>
            <person name="Hayashizaki Y."/>
            <person name="Johnson-Hopson C."/>
            <person name="Hsuan V.W."/>
            <person name="Iida K."/>
            <person name="Karnes M."/>
            <person name="Khan S."/>
            <person name="Koesema E."/>
            <person name="Ishida J."/>
            <person name="Jiang P.X."/>
            <person name="Jones T."/>
            <person name="Kawai J."/>
            <person name="Kamiya A."/>
            <person name="Meyers C."/>
            <person name="Nakajima M."/>
            <person name="Narusaka M."/>
            <person name="Seki M."/>
            <person name="Sakurai T."/>
            <person name="Satou M."/>
            <person name="Tamse R."/>
            <person name="Vaysberg M."/>
            <person name="Wallender E.K."/>
            <person name="Wong C."/>
            <person name="Yamamura Y."/>
            <person name="Yuan S."/>
            <person name="Shinozaki K."/>
            <person name="Davis R.W."/>
            <person name="Theologis A."/>
            <person name="Ecker J.R."/>
        </authorList>
    </citation>
    <scope>NUCLEOTIDE SEQUENCE [LARGE SCALE MRNA]</scope>
    <source>
        <strain>cv. Columbia</strain>
    </source>
</reference>
<reference key="4">
    <citation type="journal article" date="2002" name="Genome Biol.">
        <title>Evaluation and classification of RING-finger domains encoded by the Arabidopsis genome.</title>
        <authorList>
            <person name="Kosarev P."/>
            <person name="Mayer K.F.X."/>
            <person name="Hardtke C.S."/>
        </authorList>
    </citation>
    <scope>GENE FAMILY ORGANIZATION</scope>
</reference>
<reference key="5">
    <citation type="journal article" date="2006" name="J. Mol. Evol.">
        <title>The ATL gene family from Arabidopsis thaliana and Oryza sativa comprises a large number of putative ubiquitin ligases of the RING-H2 type.</title>
        <authorList>
            <person name="Serrano M."/>
            <person name="Parra S."/>
            <person name="Alcaraz L.D."/>
            <person name="Guzman P."/>
        </authorList>
    </citation>
    <scope>NOMENCLATURE</scope>
    <scope>GENE FAMILY ORGANIZATION</scope>
</reference>
<gene>
    <name type="primary">ATL70</name>
    <name type="ordered locus">At2g35910</name>
    <name type="ORF">F11F19.18</name>
</gene>
<comment type="catalytic activity">
    <reaction evidence="4">
        <text>S-ubiquitinyl-[E2 ubiquitin-conjugating enzyme]-L-cysteine + [acceptor protein]-L-lysine = [E2 ubiquitin-conjugating enzyme]-L-cysteine + N(6)-ubiquitinyl-[acceptor protein]-L-lysine.</text>
        <dbReference type="EC" id="2.3.2.27"/>
    </reaction>
</comment>
<comment type="pathway">
    <text>Protein modification; protein ubiquitination.</text>
</comment>
<comment type="subcellular location">
    <subcellularLocation>
        <location evidence="4">Membrane</location>
        <topology evidence="4">Single-pass membrane protein</topology>
    </subcellularLocation>
</comment>
<comment type="domain">
    <text evidence="1">The RING-type zinc finger domain mediates binding to an E2 ubiquitin-conjugating enzyme.</text>
</comment>
<comment type="similarity">
    <text evidence="4">Belongs to the RING-type zinc finger family. ATL subfamily.</text>
</comment>
<comment type="sequence caution" evidence="4">
    <conflict type="erroneous initiation">
        <sequence resource="EMBL-CDS" id="AAD21466"/>
    </conflict>
</comment>
<name>ATL70_ARATH</name>
<dbReference type="EC" id="2.3.2.27" evidence="4"/>
<dbReference type="EMBL" id="AC007017">
    <property type="protein sequence ID" value="AAD21466.1"/>
    <property type="status" value="ALT_INIT"/>
    <property type="molecule type" value="Genomic_DNA"/>
</dbReference>
<dbReference type="EMBL" id="CP002685">
    <property type="protein sequence ID" value="AEC09176.1"/>
    <property type="molecule type" value="Genomic_DNA"/>
</dbReference>
<dbReference type="EMBL" id="AY090933">
    <property type="protein sequence ID" value="AAM13985.1"/>
    <property type="molecule type" value="mRNA"/>
</dbReference>
<dbReference type="EMBL" id="AY122973">
    <property type="protein sequence ID" value="AAM67506.1"/>
    <property type="molecule type" value="mRNA"/>
</dbReference>
<dbReference type="PIR" id="E84774">
    <property type="entry name" value="E84774"/>
</dbReference>
<dbReference type="RefSeq" id="NP_850254.1">
    <property type="nucleotide sequence ID" value="NM_179923.2"/>
</dbReference>
<dbReference type="SMR" id="Q8RX29"/>
<dbReference type="BioGRID" id="3508">
    <property type="interactions" value="31"/>
</dbReference>
<dbReference type="IntAct" id="Q8RX29">
    <property type="interactions" value="31"/>
</dbReference>
<dbReference type="GlyGen" id="Q8RX29">
    <property type="glycosylation" value="1 site"/>
</dbReference>
<dbReference type="iPTMnet" id="Q8RX29"/>
<dbReference type="PaxDb" id="3702-AT2G35910.1"/>
<dbReference type="ProteomicsDB" id="246647"/>
<dbReference type="EnsemblPlants" id="AT2G35910.1">
    <property type="protein sequence ID" value="AT2G35910.1"/>
    <property type="gene ID" value="AT2G35910"/>
</dbReference>
<dbReference type="GeneID" id="818164"/>
<dbReference type="Gramene" id="AT2G35910.1">
    <property type="protein sequence ID" value="AT2G35910.1"/>
    <property type="gene ID" value="AT2G35910"/>
</dbReference>
<dbReference type="KEGG" id="ath:AT2G35910"/>
<dbReference type="Araport" id="AT2G35910"/>
<dbReference type="TAIR" id="AT2G35910">
    <property type="gene designation" value="ATL70"/>
</dbReference>
<dbReference type="eggNOG" id="KOG0800">
    <property type="taxonomic scope" value="Eukaryota"/>
</dbReference>
<dbReference type="HOGENOM" id="CLU_013137_15_4_1"/>
<dbReference type="InParanoid" id="Q8RX29"/>
<dbReference type="OMA" id="TANRNEH"/>
<dbReference type="PhylomeDB" id="Q8RX29"/>
<dbReference type="UniPathway" id="UPA00143"/>
<dbReference type="PRO" id="PR:Q8RX29"/>
<dbReference type="Proteomes" id="UP000006548">
    <property type="component" value="Chromosome 2"/>
</dbReference>
<dbReference type="ExpressionAtlas" id="Q8RX29">
    <property type="expression patterns" value="baseline and differential"/>
</dbReference>
<dbReference type="GO" id="GO:0016020">
    <property type="term" value="C:membrane"/>
    <property type="evidence" value="ECO:0007669"/>
    <property type="project" value="UniProtKB-SubCell"/>
</dbReference>
<dbReference type="GO" id="GO:0016740">
    <property type="term" value="F:transferase activity"/>
    <property type="evidence" value="ECO:0007669"/>
    <property type="project" value="UniProtKB-KW"/>
</dbReference>
<dbReference type="GO" id="GO:0008270">
    <property type="term" value="F:zinc ion binding"/>
    <property type="evidence" value="ECO:0007669"/>
    <property type="project" value="UniProtKB-KW"/>
</dbReference>
<dbReference type="GO" id="GO:0016567">
    <property type="term" value="P:protein ubiquitination"/>
    <property type="evidence" value="ECO:0007669"/>
    <property type="project" value="UniProtKB-UniPathway"/>
</dbReference>
<dbReference type="CDD" id="cd16461">
    <property type="entry name" value="RING-H2_EL5-like"/>
    <property type="match status" value="1"/>
</dbReference>
<dbReference type="Gene3D" id="3.30.40.10">
    <property type="entry name" value="Zinc/RING finger domain, C3HC4 (zinc finger)"/>
    <property type="match status" value="1"/>
</dbReference>
<dbReference type="InterPro" id="IPR044289">
    <property type="entry name" value="ATL67-70"/>
</dbReference>
<dbReference type="InterPro" id="IPR001841">
    <property type="entry name" value="Znf_RING"/>
</dbReference>
<dbReference type="InterPro" id="IPR013083">
    <property type="entry name" value="Znf_RING/FYVE/PHD"/>
</dbReference>
<dbReference type="PANTHER" id="PTHR46592">
    <property type="entry name" value="RING-H2 FINGER PROTEIN ATL67"/>
    <property type="match status" value="1"/>
</dbReference>
<dbReference type="PANTHER" id="PTHR46592:SF16">
    <property type="entry name" value="RING-H2 FINGER PROTEIN ATL70"/>
    <property type="match status" value="1"/>
</dbReference>
<dbReference type="Pfam" id="PF13639">
    <property type="entry name" value="zf-RING_2"/>
    <property type="match status" value="1"/>
</dbReference>
<dbReference type="SMART" id="SM00184">
    <property type="entry name" value="RING"/>
    <property type="match status" value="1"/>
</dbReference>
<dbReference type="SUPFAM" id="SSF57850">
    <property type="entry name" value="RING/U-box"/>
    <property type="match status" value="1"/>
</dbReference>
<dbReference type="PROSITE" id="PS50089">
    <property type="entry name" value="ZF_RING_2"/>
    <property type="match status" value="1"/>
</dbReference>
<accession>Q8RX29</accession>
<accession>Q9SJ59</accession>
<evidence type="ECO:0000250" key="1"/>
<evidence type="ECO:0000255" key="2"/>
<evidence type="ECO:0000255" key="3">
    <source>
        <dbReference type="PROSITE-ProRule" id="PRU00175"/>
    </source>
</evidence>
<evidence type="ECO:0000305" key="4"/>
<organism>
    <name type="scientific">Arabidopsis thaliana</name>
    <name type="common">Mouse-ear cress</name>
    <dbReference type="NCBI Taxonomy" id="3702"/>
    <lineage>
        <taxon>Eukaryota</taxon>
        <taxon>Viridiplantae</taxon>
        <taxon>Streptophyta</taxon>
        <taxon>Embryophyta</taxon>
        <taxon>Tracheophyta</taxon>
        <taxon>Spermatophyta</taxon>
        <taxon>Magnoliopsida</taxon>
        <taxon>eudicotyledons</taxon>
        <taxon>Gunneridae</taxon>
        <taxon>Pentapetalae</taxon>
        <taxon>rosids</taxon>
        <taxon>malvids</taxon>
        <taxon>Brassicales</taxon>
        <taxon>Brassicaceae</taxon>
        <taxon>Camelineae</taxon>
        <taxon>Arabidopsis</taxon>
    </lineage>
</organism>
<protein>
    <recommendedName>
        <fullName>RING-H2 finger protein ATL70</fullName>
        <ecNumber evidence="4">2.3.2.27</ecNumber>
    </recommendedName>
    <alternativeName>
        <fullName evidence="4">RING-type E3 ubiquitin transferase ATL70</fullName>
    </alternativeName>
</protein>
<sequence length="217" mass="23881">MLQFTLSYIKSLTKNLSIISPLPPPKPIKQNHQTKPAMNNFQPPPPSEMPDYNGLLGTDDIGGFRYGIGVSIGVLLLITTITLTSYYCTRNQLSSSPSQTNQDSTRIHHHHHHVIIDVVPGLDEDTIQSYPKILYSEAKGPTTASCCAICLGDYKGKHLLRQLPDCNHLFHLKCIDTWLRLNPTCPVCRTSPLPTPLSTPLAEVVPLASSVAATRMS</sequence>
<feature type="chain" id="PRO_0000055781" description="RING-H2 finger protein ATL70">
    <location>
        <begin position="1"/>
        <end position="217"/>
    </location>
</feature>
<feature type="transmembrane region" description="Helical" evidence="2">
    <location>
        <begin position="61"/>
        <end position="81"/>
    </location>
</feature>
<feature type="zinc finger region" description="RING-type; atypical" evidence="3">
    <location>
        <begin position="147"/>
        <end position="189"/>
    </location>
</feature>